<protein>
    <recommendedName>
        <fullName evidence="1">Trigger factor</fullName>
        <shortName evidence="1">TF</shortName>
        <ecNumber evidence="1">5.2.1.8</ecNumber>
    </recommendedName>
    <alternativeName>
        <fullName evidence="1">PPIase</fullName>
    </alternativeName>
</protein>
<gene>
    <name evidence="1" type="primary">tig</name>
    <name type="ordered locus">PPA1575</name>
</gene>
<evidence type="ECO:0000255" key="1">
    <source>
        <dbReference type="HAMAP-Rule" id="MF_00303"/>
    </source>
</evidence>
<evidence type="ECO:0000256" key="2">
    <source>
        <dbReference type="SAM" id="MobiDB-lite"/>
    </source>
</evidence>
<comment type="function">
    <text evidence="1">Involved in protein export. Acts as a chaperone by maintaining the newly synthesized protein in an open conformation. Functions as a peptidyl-prolyl cis-trans isomerase.</text>
</comment>
<comment type="catalytic activity">
    <reaction evidence="1">
        <text>[protein]-peptidylproline (omega=180) = [protein]-peptidylproline (omega=0)</text>
        <dbReference type="Rhea" id="RHEA:16237"/>
        <dbReference type="Rhea" id="RHEA-COMP:10747"/>
        <dbReference type="Rhea" id="RHEA-COMP:10748"/>
        <dbReference type="ChEBI" id="CHEBI:83833"/>
        <dbReference type="ChEBI" id="CHEBI:83834"/>
        <dbReference type="EC" id="5.2.1.8"/>
    </reaction>
</comment>
<comment type="subcellular location">
    <subcellularLocation>
        <location>Cytoplasm</location>
    </subcellularLocation>
    <text evidence="1">About half TF is bound to the ribosome near the polypeptide exit tunnel while the other half is free in the cytoplasm.</text>
</comment>
<comment type="domain">
    <text evidence="1">Consists of 3 domains; the N-terminus binds the ribosome, the middle domain has PPIase activity, while the C-terminus has intrinsic chaperone activity on its own.</text>
</comment>
<comment type="similarity">
    <text evidence="1">Belongs to the FKBP-type PPIase family. Tig subfamily.</text>
</comment>
<feature type="chain" id="PRO_0000256590" description="Trigger factor">
    <location>
        <begin position="1"/>
        <end position="530"/>
    </location>
</feature>
<feature type="domain" description="PPIase FKBP-type" evidence="1">
    <location>
        <begin position="162"/>
        <end position="243"/>
    </location>
</feature>
<feature type="region of interest" description="Disordered" evidence="2">
    <location>
        <begin position="432"/>
        <end position="530"/>
    </location>
</feature>
<feature type="compositionally biased region" description="Basic and acidic residues" evidence="2">
    <location>
        <begin position="459"/>
        <end position="478"/>
    </location>
</feature>
<feature type="compositionally biased region" description="Basic and acidic residues" evidence="2">
    <location>
        <begin position="501"/>
        <end position="512"/>
    </location>
</feature>
<accession>Q6A7E7</accession>
<organism>
    <name type="scientific">Cutibacterium acnes (strain DSM 16379 / KPA171202)</name>
    <name type="common">Propionibacterium acnes</name>
    <dbReference type="NCBI Taxonomy" id="267747"/>
    <lineage>
        <taxon>Bacteria</taxon>
        <taxon>Bacillati</taxon>
        <taxon>Actinomycetota</taxon>
        <taxon>Actinomycetes</taxon>
        <taxon>Propionibacteriales</taxon>
        <taxon>Propionibacteriaceae</taxon>
        <taxon>Cutibacterium</taxon>
    </lineage>
</organism>
<dbReference type="EC" id="5.2.1.8" evidence="1"/>
<dbReference type="EMBL" id="AE017283">
    <property type="protein sequence ID" value="AAT83318.1"/>
    <property type="molecule type" value="Genomic_DNA"/>
</dbReference>
<dbReference type="RefSeq" id="WP_002531075.1">
    <property type="nucleotide sequence ID" value="NZ_CP025935.1"/>
</dbReference>
<dbReference type="SMR" id="Q6A7E7"/>
<dbReference type="EnsemblBacteria" id="AAT83318">
    <property type="protein sequence ID" value="AAT83318"/>
    <property type="gene ID" value="PPA1575"/>
</dbReference>
<dbReference type="KEGG" id="pac:PPA1575"/>
<dbReference type="PATRIC" id="fig|267747.3.peg.1621"/>
<dbReference type="eggNOG" id="COG0544">
    <property type="taxonomic scope" value="Bacteria"/>
</dbReference>
<dbReference type="HOGENOM" id="CLU_033058_3_0_11"/>
<dbReference type="Proteomes" id="UP000000603">
    <property type="component" value="Chromosome"/>
</dbReference>
<dbReference type="GO" id="GO:0005737">
    <property type="term" value="C:cytoplasm"/>
    <property type="evidence" value="ECO:0007669"/>
    <property type="project" value="UniProtKB-SubCell"/>
</dbReference>
<dbReference type="GO" id="GO:0003755">
    <property type="term" value="F:peptidyl-prolyl cis-trans isomerase activity"/>
    <property type="evidence" value="ECO:0007669"/>
    <property type="project" value="UniProtKB-UniRule"/>
</dbReference>
<dbReference type="GO" id="GO:0044183">
    <property type="term" value="F:protein folding chaperone"/>
    <property type="evidence" value="ECO:0007669"/>
    <property type="project" value="TreeGrafter"/>
</dbReference>
<dbReference type="GO" id="GO:0043022">
    <property type="term" value="F:ribosome binding"/>
    <property type="evidence" value="ECO:0007669"/>
    <property type="project" value="TreeGrafter"/>
</dbReference>
<dbReference type="GO" id="GO:0051083">
    <property type="term" value="P:'de novo' cotranslational protein folding"/>
    <property type="evidence" value="ECO:0007669"/>
    <property type="project" value="TreeGrafter"/>
</dbReference>
<dbReference type="GO" id="GO:0051301">
    <property type="term" value="P:cell division"/>
    <property type="evidence" value="ECO:0007669"/>
    <property type="project" value="UniProtKB-KW"/>
</dbReference>
<dbReference type="GO" id="GO:0061077">
    <property type="term" value="P:chaperone-mediated protein folding"/>
    <property type="evidence" value="ECO:0007669"/>
    <property type="project" value="TreeGrafter"/>
</dbReference>
<dbReference type="GO" id="GO:0015031">
    <property type="term" value="P:protein transport"/>
    <property type="evidence" value="ECO:0007669"/>
    <property type="project" value="UniProtKB-UniRule"/>
</dbReference>
<dbReference type="GO" id="GO:0043335">
    <property type="term" value="P:protein unfolding"/>
    <property type="evidence" value="ECO:0007669"/>
    <property type="project" value="TreeGrafter"/>
</dbReference>
<dbReference type="Gene3D" id="3.10.50.40">
    <property type="match status" value="1"/>
</dbReference>
<dbReference type="Gene3D" id="3.30.70.1050">
    <property type="entry name" value="Trigger factor ribosome-binding domain"/>
    <property type="match status" value="1"/>
</dbReference>
<dbReference type="Gene3D" id="1.10.3120.10">
    <property type="entry name" value="Trigger factor, C-terminal domain"/>
    <property type="match status" value="1"/>
</dbReference>
<dbReference type="HAMAP" id="MF_00303">
    <property type="entry name" value="Trigger_factor_Tig"/>
    <property type="match status" value="1"/>
</dbReference>
<dbReference type="InterPro" id="IPR046357">
    <property type="entry name" value="PPIase_dom_sf"/>
</dbReference>
<dbReference type="InterPro" id="IPR001179">
    <property type="entry name" value="PPIase_FKBP_dom"/>
</dbReference>
<dbReference type="InterPro" id="IPR005215">
    <property type="entry name" value="Trig_fac"/>
</dbReference>
<dbReference type="InterPro" id="IPR008880">
    <property type="entry name" value="Trigger_fac_C"/>
</dbReference>
<dbReference type="InterPro" id="IPR037041">
    <property type="entry name" value="Trigger_fac_C_sf"/>
</dbReference>
<dbReference type="InterPro" id="IPR008881">
    <property type="entry name" value="Trigger_fac_ribosome-bd_bac"/>
</dbReference>
<dbReference type="InterPro" id="IPR036611">
    <property type="entry name" value="Trigger_fac_ribosome-bd_sf"/>
</dbReference>
<dbReference type="InterPro" id="IPR027304">
    <property type="entry name" value="Trigger_fact/SurA_dom_sf"/>
</dbReference>
<dbReference type="NCBIfam" id="TIGR00115">
    <property type="entry name" value="tig"/>
    <property type="match status" value="1"/>
</dbReference>
<dbReference type="PANTHER" id="PTHR30560">
    <property type="entry name" value="TRIGGER FACTOR CHAPERONE AND PEPTIDYL-PROLYL CIS/TRANS ISOMERASE"/>
    <property type="match status" value="1"/>
</dbReference>
<dbReference type="PANTHER" id="PTHR30560:SF3">
    <property type="entry name" value="TRIGGER FACTOR-LIKE PROTEIN TIG, CHLOROPLASTIC"/>
    <property type="match status" value="1"/>
</dbReference>
<dbReference type="Pfam" id="PF00254">
    <property type="entry name" value="FKBP_C"/>
    <property type="match status" value="1"/>
</dbReference>
<dbReference type="Pfam" id="PF05698">
    <property type="entry name" value="Trigger_C"/>
    <property type="match status" value="1"/>
</dbReference>
<dbReference type="Pfam" id="PF05697">
    <property type="entry name" value="Trigger_N"/>
    <property type="match status" value="1"/>
</dbReference>
<dbReference type="SUPFAM" id="SSF54534">
    <property type="entry name" value="FKBP-like"/>
    <property type="match status" value="1"/>
</dbReference>
<dbReference type="SUPFAM" id="SSF109998">
    <property type="entry name" value="Triger factor/SurA peptide-binding domain-like"/>
    <property type="match status" value="1"/>
</dbReference>
<dbReference type="SUPFAM" id="SSF102735">
    <property type="entry name" value="Trigger factor ribosome-binding domain"/>
    <property type="match status" value="1"/>
</dbReference>
<dbReference type="PROSITE" id="PS50059">
    <property type="entry name" value="FKBP_PPIASE"/>
    <property type="match status" value="1"/>
</dbReference>
<keyword id="KW-0131">Cell cycle</keyword>
<keyword id="KW-0132">Cell division</keyword>
<keyword id="KW-0143">Chaperone</keyword>
<keyword id="KW-0963">Cytoplasm</keyword>
<keyword id="KW-0413">Isomerase</keyword>
<keyword id="KW-0697">Rotamase</keyword>
<sequence>MPSSLEKLSTNRVKLTIEMPFDELKPSLDKAYKDIANQVNVPGFRKGKVPAPVIDQRFGRGVVLQEAINDALPAAYGKAIEENTVVPLGQPEIEVTKLEDGEVVEFTAEVDVRPDFDLPDVSAISVEVPAVEVPDEDVDERVETLRQRFATNTEVERAAAKDDLVTIDLAGTRDGEVLEDATASGVTYKVGSEGMLEGLDEAVTGLKAGESAEFHSTLVGGPLRGQDADIKVTVTKVCEQELPAVDDDFAQLVSQFDTVDEMRADLRTALENMARLDQAADARDKVLEEVISKIDIELPTNLIDSELEARRQQVNQQLAQAGMTVEEYLEDSEEEVDNADDFWAEIEKRSLDALKAQIVLDKMADDDEIGVEQNELTELLFRKAQQNGTSPEEEAQHMMQHNHLPDWMQEIRRGKALASMVGAATVTDSKGNALELDRIQPDGTIADKQAEEDAPAEDSAEKADGKATEESKAEEKAPAKKATTKKISAKKSAGAKATTKKVVDAKSDDKPAAKKPAPKKKTAAKDDKSK</sequence>
<reference key="1">
    <citation type="journal article" date="2004" name="Science">
        <title>The complete genome sequence of Propionibacterium acnes, a commensal of human skin.</title>
        <authorList>
            <person name="Brueggemann H."/>
            <person name="Henne A."/>
            <person name="Hoster F."/>
            <person name="Liesegang H."/>
            <person name="Wiezer A."/>
            <person name="Strittmatter A."/>
            <person name="Hujer S."/>
            <person name="Duerre P."/>
            <person name="Gottschalk G."/>
        </authorList>
    </citation>
    <scope>NUCLEOTIDE SEQUENCE [LARGE SCALE GENOMIC DNA]</scope>
    <source>
        <strain>DSM 16379 / KPA171202</strain>
    </source>
</reference>
<proteinExistence type="inferred from homology"/>
<name>TIG_CUTAK</name>